<sequence>MSAKKLFIQTLGCAMNVRDSEHMIAELTQKENYALTEDIKEADLILINTCSVREKPVHKLFSEVGGFEKVKKEGAKIGVCGCTASHLGNEIFKRAPYVDFVLGARNISKITQAIKTPKFMGIDIDYDESEFAFADFRNSIYKSYINISIGCDKHCTYCIVPHTRGDEISIPFNIIHKEAQKAVEKGAKEIFLLGQNVNNYGKRFRNEHKKMDFSDLLEELSTIEDLERIRFTSPHPLHMDDKFLEVFANNPKVCKSMHMPLQSGSSEILKAMKRGYTKKWYLNRALKLRELCPNVSISTDIIVAFPGESEKDFEETMDVLEKVRFEQIFSFKYSKRPLTKAATMSNQIDEETASRRLSTLQNRHSEILDEIVKKQENKTFKVLFEELRVGNSIAGRTDNNFLVQVEGSEELLGQFKEVKITNAKRMVLYGEII</sequence>
<dbReference type="EC" id="2.8.4.3" evidence="1"/>
<dbReference type="EMBL" id="CP000768">
    <property type="protein sequence ID" value="ABS43690.1"/>
    <property type="molecule type" value="Genomic_DNA"/>
</dbReference>
<dbReference type="SMR" id="A7H4S5"/>
<dbReference type="KEGG" id="cjd:JJD26997_1481"/>
<dbReference type="HOGENOM" id="CLU_018697_2_0_7"/>
<dbReference type="Proteomes" id="UP000002302">
    <property type="component" value="Chromosome"/>
</dbReference>
<dbReference type="GO" id="GO:0005829">
    <property type="term" value="C:cytosol"/>
    <property type="evidence" value="ECO:0007669"/>
    <property type="project" value="TreeGrafter"/>
</dbReference>
<dbReference type="GO" id="GO:0051539">
    <property type="term" value="F:4 iron, 4 sulfur cluster binding"/>
    <property type="evidence" value="ECO:0007669"/>
    <property type="project" value="UniProtKB-UniRule"/>
</dbReference>
<dbReference type="GO" id="GO:0046872">
    <property type="term" value="F:metal ion binding"/>
    <property type="evidence" value="ECO:0007669"/>
    <property type="project" value="UniProtKB-KW"/>
</dbReference>
<dbReference type="GO" id="GO:0035597">
    <property type="term" value="F:N6-isopentenyladenosine methylthiotransferase activity"/>
    <property type="evidence" value="ECO:0007669"/>
    <property type="project" value="TreeGrafter"/>
</dbReference>
<dbReference type="CDD" id="cd01335">
    <property type="entry name" value="Radical_SAM"/>
    <property type="match status" value="1"/>
</dbReference>
<dbReference type="FunFam" id="3.40.50.12160:FF:000003">
    <property type="entry name" value="CDK5 regulatory subunit-associated protein 1"/>
    <property type="match status" value="1"/>
</dbReference>
<dbReference type="FunFam" id="3.80.30.20:FF:000001">
    <property type="entry name" value="tRNA-2-methylthio-N(6)-dimethylallyladenosine synthase 2"/>
    <property type="match status" value="1"/>
</dbReference>
<dbReference type="Gene3D" id="3.40.50.12160">
    <property type="entry name" value="Methylthiotransferase, N-terminal domain"/>
    <property type="match status" value="1"/>
</dbReference>
<dbReference type="Gene3D" id="3.80.30.20">
    <property type="entry name" value="tm_1862 like domain"/>
    <property type="match status" value="1"/>
</dbReference>
<dbReference type="HAMAP" id="MF_01864">
    <property type="entry name" value="tRNA_metthiotr_MiaB"/>
    <property type="match status" value="1"/>
</dbReference>
<dbReference type="InterPro" id="IPR006638">
    <property type="entry name" value="Elp3/MiaA/NifB-like_rSAM"/>
</dbReference>
<dbReference type="InterPro" id="IPR005839">
    <property type="entry name" value="Methylthiotransferase"/>
</dbReference>
<dbReference type="InterPro" id="IPR020612">
    <property type="entry name" value="Methylthiotransferase_CS"/>
</dbReference>
<dbReference type="InterPro" id="IPR013848">
    <property type="entry name" value="Methylthiotransferase_N"/>
</dbReference>
<dbReference type="InterPro" id="IPR038135">
    <property type="entry name" value="Methylthiotransferase_N_sf"/>
</dbReference>
<dbReference type="InterPro" id="IPR006463">
    <property type="entry name" value="MiaB_methiolase"/>
</dbReference>
<dbReference type="InterPro" id="IPR007197">
    <property type="entry name" value="rSAM"/>
</dbReference>
<dbReference type="InterPro" id="IPR023404">
    <property type="entry name" value="rSAM_horseshoe"/>
</dbReference>
<dbReference type="InterPro" id="IPR002792">
    <property type="entry name" value="TRAM_dom"/>
</dbReference>
<dbReference type="NCBIfam" id="TIGR01574">
    <property type="entry name" value="miaB-methiolase"/>
    <property type="match status" value="1"/>
</dbReference>
<dbReference type="NCBIfam" id="TIGR00089">
    <property type="entry name" value="MiaB/RimO family radical SAM methylthiotransferase"/>
    <property type="match status" value="1"/>
</dbReference>
<dbReference type="PANTHER" id="PTHR43020">
    <property type="entry name" value="CDK5 REGULATORY SUBUNIT-ASSOCIATED PROTEIN 1"/>
    <property type="match status" value="1"/>
</dbReference>
<dbReference type="PANTHER" id="PTHR43020:SF2">
    <property type="entry name" value="MITOCHONDRIAL TRNA METHYLTHIOTRANSFERASE CDK5RAP1"/>
    <property type="match status" value="1"/>
</dbReference>
<dbReference type="Pfam" id="PF04055">
    <property type="entry name" value="Radical_SAM"/>
    <property type="match status" value="1"/>
</dbReference>
<dbReference type="Pfam" id="PF01938">
    <property type="entry name" value="TRAM"/>
    <property type="match status" value="1"/>
</dbReference>
<dbReference type="Pfam" id="PF00919">
    <property type="entry name" value="UPF0004"/>
    <property type="match status" value="1"/>
</dbReference>
<dbReference type="SFLD" id="SFLDF00273">
    <property type="entry name" value="(dimethylallyl)adenosine_tRNA"/>
    <property type="match status" value="1"/>
</dbReference>
<dbReference type="SFLD" id="SFLDG01082">
    <property type="entry name" value="B12-binding_domain_containing"/>
    <property type="match status" value="1"/>
</dbReference>
<dbReference type="SFLD" id="SFLDG01061">
    <property type="entry name" value="methylthiotransferase"/>
    <property type="match status" value="1"/>
</dbReference>
<dbReference type="SMART" id="SM00729">
    <property type="entry name" value="Elp3"/>
    <property type="match status" value="1"/>
</dbReference>
<dbReference type="SUPFAM" id="SSF102114">
    <property type="entry name" value="Radical SAM enzymes"/>
    <property type="match status" value="1"/>
</dbReference>
<dbReference type="PROSITE" id="PS51449">
    <property type="entry name" value="MTTASE_N"/>
    <property type="match status" value="1"/>
</dbReference>
<dbReference type="PROSITE" id="PS01278">
    <property type="entry name" value="MTTASE_RADICAL"/>
    <property type="match status" value="1"/>
</dbReference>
<dbReference type="PROSITE" id="PS51918">
    <property type="entry name" value="RADICAL_SAM"/>
    <property type="match status" value="1"/>
</dbReference>
<dbReference type="PROSITE" id="PS50926">
    <property type="entry name" value="TRAM"/>
    <property type="match status" value="1"/>
</dbReference>
<reference key="1">
    <citation type="submission" date="2007-07" db="EMBL/GenBank/DDBJ databases">
        <title>Complete genome sequence of Campylobacter jejuni subsp doylei 269.97 isolated from human blood.</title>
        <authorList>
            <person name="Fouts D.E."/>
            <person name="Mongodin E.F."/>
            <person name="Puiu D."/>
            <person name="Sebastian Y."/>
            <person name="Miller W.G."/>
            <person name="Mandrell R.E."/>
            <person name="Lastovica A.J."/>
            <person name="Nelson K.E."/>
        </authorList>
    </citation>
    <scope>NUCLEOTIDE SEQUENCE [LARGE SCALE GENOMIC DNA]</scope>
    <source>
        <strain>ATCC BAA-1458 / RM4099 / 269.97</strain>
    </source>
</reference>
<proteinExistence type="inferred from homology"/>
<organism>
    <name type="scientific">Campylobacter jejuni subsp. doylei (strain ATCC BAA-1458 / RM4099 / 269.97)</name>
    <dbReference type="NCBI Taxonomy" id="360109"/>
    <lineage>
        <taxon>Bacteria</taxon>
        <taxon>Pseudomonadati</taxon>
        <taxon>Campylobacterota</taxon>
        <taxon>Epsilonproteobacteria</taxon>
        <taxon>Campylobacterales</taxon>
        <taxon>Campylobacteraceae</taxon>
        <taxon>Campylobacter</taxon>
    </lineage>
</organism>
<accession>A7H4S5</accession>
<evidence type="ECO:0000255" key="1">
    <source>
        <dbReference type="HAMAP-Rule" id="MF_01864"/>
    </source>
</evidence>
<evidence type="ECO:0000255" key="2">
    <source>
        <dbReference type="PROSITE-ProRule" id="PRU01266"/>
    </source>
</evidence>
<protein>
    <recommendedName>
        <fullName evidence="1">tRNA-2-methylthio-N(6)-dimethylallyladenosine synthase</fullName>
        <ecNumber evidence="1">2.8.4.3</ecNumber>
    </recommendedName>
    <alternativeName>
        <fullName evidence="1">(Dimethylallyl)adenosine tRNA methylthiotransferase MiaB</fullName>
    </alternativeName>
    <alternativeName>
        <fullName evidence="1">tRNA-i(6)A37 methylthiotransferase</fullName>
    </alternativeName>
</protein>
<comment type="function">
    <text evidence="1">Catalyzes the methylthiolation of N6-(dimethylallyl)adenosine (i(6)A), leading to the formation of 2-methylthio-N6-(dimethylallyl)adenosine (ms(2)i(6)A) at position 37 in tRNAs that read codons beginning with uridine.</text>
</comment>
<comment type="catalytic activity">
    <reaction evidence="1">
        <text>N(6)-dimethylallyladenosine(37) in tRNA + (sulfur carrier)-SH + AH2 + 2 S-adenosyl-L-methionine = 2-methylsulfanyl-N(6)-dimethylallyladenosine(37) in tRNA + (sulfur carrier)-H + 5'-deoxyadenosine + L-methionine + A + S-adenosyl-L-homocysteine + 2 H(+)</text>
        <dbReference type="Rhea" id="RHEA:37067"/>
        <dbReference type="Rhea" id="RHEA-COMP:10375"/>
        <dbReference type="Rhea" id="RHEA-COMP:10376"/>
        <dbReference type="Rhea" id="RHEA-COMP:14737"/>
        <dbReference type="Rhea" id="RHEA-COMP:14739"/>
        <dbReference type="ChEBI" id="CHEBI:13193"/>
        <dbReference type="ChEBI" id="CHEBI:15378"/>
        <dbReference type="ChEBI" id="CHEBI:17319"/>
        <dbReference type="ChEBI" id="CHEBI:17499"/>
        <dbReference type="ChEBI" id="CHEBI:29917"/>
        <dbReference type="ChEBI" id="CHEBI:57844"/>
        <dbReference type="ChEBI" id="CHEBI:57856"/>
        <dbReference type="ChEBI" id="CHEBI:59789"/>
        <dbReference type="ChEBI" id="CHEBI:64428"/>
        <dbReference type="ChEBI" id="CHEBI:74415"/>
        <dbReference type="ChEBI" id="CHEBI:74417"/>
        <dbReference type="EC" id="2.8.4.3"/>
    </reaction>
</comment>
<comment type="cofactor">
    <cofactor evidence="1">
        <name>[4Fe-4S] cluster</name>
        <dbReference type="ChEBI" id="CHEBI:49883"/>
    </cofactor>
    <text evidence="1">Binds 2 [4Fe-4S] clusters. One cluster is coordinated with 3 cysteines and an exchangeable S-adenosyl-L-methionine.</text>
</comment>
<comment type="subunit">
    <text evidence="1">Monomer.</text>
</comment>
<comment type="subcellular location">
    <subcellularLocation>
        <location evidence="1">Cytoplasm</location>
    </subcellularLocation>
</comment>
<comment type="similarity">
    <text evidence="1">Belongs to the methylthiotransferase family. MiaB subfamily.</text>
</comment>
<feature type="chain" id="PRO_0000374200" description="tRNA-2-methylthio-N(6)-dimethylallyladenosine synthase">
    <location>
        <begin position="1"/>
        <end position="433"/>
    </location>
</feature>
<feature type="domain" description="MTTase N-terminal" evidence="1">
    <location>
        <begin position="4"/>
        <end position="119"/>
    </location>
</feature>
<feature type="domain" description="Radical SAM core" evidence="2">
    <location>
        <begin position="137"/>
        <end position="370"/>
    </location>
</feature>
<feature type="domain" description="TRAM" evidence="1">
    <location>
        <begin position="373"/>
        <end position="433"/>
    </location>
</feature>
<feature type="binding site" evidence="1">
    <location>
        <position position="13"/>
    </location>
    <ligand>
        <name>[4Fe-4S] cluster</name>
        <dbReference type="ChEBI" id="CHEBI:49883"/>
        <label>1</label>
    </ligand>
</feature>
<feature type="binding site" evidence="1">
    <location>
        <position position="50"/>
    </location>
    <ligand>
        <name>[4Fe-4S] cluster</name>
        <dbReference type="ChEBI" id="CHEBI:49883"/>
        <label>1</label>
    </ligand>
</feature>
<feature type="binding site" evidence="1">
    <location>
        <position position="82"/>
    </location>
    <ligand>
        <name>[4Fe-4S] cluster</name>
        <dbReference type="ChEBI" id="CHEBI:49883"/>
        <label>1</label>
    </ligand>
</feature>
<feature type="binding site" evidence="1">
    <location>
        <position position="151"/>
    </location>
    <ligand>
        <name>[4Fe-4S] cluster</name>
        <dbReference type="ChEBI" id="CHEBI:49883"/>
        <label>2</label>
        <note>4Fe-4S-S-AdoMet</note>
    </ligand>
</feature>
<feature type="binding site" evidence="1">
    <location>
        <position position="155"/>
    </location>
    <ligand>
        <name>[4Fe-4S] cluster</name>
        <dbReference type="ChEBI" id="CHEBI:49883"/>
        <label>2</label>
        <note>4Fe-4S-S-AdoMet</note>
    </ligand>
</feature>
<feature type="binding site" evidence="1">
    <location>
        <position position="158"/>
    </location>
    <ligand>
        <name>[4Fe-4S] cluster</name>
        <dbReference type="ChEBI" id="CHEBI:49883"/>
        <label>2</label>
        <note>4Fe-4S-S-AdoMet</note>
    </ligand>
</feature>
<gene>
    <name evidence="1" type="primary">miaB</name>
    <name type="ordered locus">JJD26997_1481</name>
</gene>
<keyword id="KW-0004">4Fe-4S</keyword>
<keyword id="KW-0963">Cytoplasm</keyword>
<keyword id="KW-0408">Iron</keyword>
<keyword id="KW-0411">Iron-sulfur</keyword>
<keyword id="KW-0479">Metal-binding</keyword>
<keyword id="KW-0949">S-adenosyl-L-methionine</keyword>
<keyword id="KW-0808">Transferase</keyword>
<keyword id="KW-0819">tRNA processing</keyword>
<name>MIAB_CAMJD</name>